<comment type="function">
    <text evidence="8">Mediates coordination of peptidoglycan synthesis and outer membrane constriction during cell division. Promotes physical and functional coordination of the PBP1B-LpoB and Tol machines, and regulates PBP1B activity in response to Tol energy state.</text>
</comment>
<comment type="subunit">
    <text evidence="4 6 7 8">Homotrimer (PubMed:20455268, PubMed:20816983). Interacts directly with the central domain of TolA and with PBP1B (PubMed:11994151, PubMed:20816983, PubMed:25951518). Binding to TolA disrupts the homotrimer to form a YbgF/TolA heterodimer with weak affinity (PubMed:20816983). Forms a quaternary complex with PBP1B-LpoB and TolA (PubMed:25951518).</text>
</comment>
<comment type="subcellular location">
    <subcellularLocation>
        <location evidence="2 9">Periplasm</location>
    </subcellularLocation>
    <text evidence="5 8">Targeting to the Sec-translocase for transport across the inner membrane is SecB-dependent (PubMed:16352602). Localizes to the septum concurrent with PBP1B-LpoB and Tol at the onset of constriction (PubMed:25951518). Localization is dependent on divisome assembly and requires ongoing septal peptidoglycan synthesis (PubMed:25951518).</text>
</comment>
<comment type="domain">
    <text evidence="6 7">Contains an N-terminal coiled-coil domain and a C-terminal TPR domain, separated by a flexible linker. The N-terminal domain forms a stable trimer and controls the oligomeric status. The C-terminal domain, which can also trimerize, is involved in interaction with TolA.</text>
</comment>
<comment type="disruption phenotype">
    <text evidence="8">Deletion mutant is sensitive to multiple beta-lactams, including cefsulodin. It leads to defects in outer membrane integrity, envelope defects and elevated cell lysis.</text>
</comment>
<comment type="similarity">
    <text evidence="2 11">Belongs to the CpoB family.</text>
</comment>
<comment type="sequence caution" evidence="11">
    <conflict type="frameshift">
        <sequence resource="EMBL" id="X65796"/>
    </conflict>
</comment>
<keyword id="KW-0002">3D-structure</keyword>
<keyword id="KW-0131">Cell cycle</keyword>
<keyword id="KW-0132">Cell division</keyword>
<keyword id="KW-0175">Coiled coil</keyword>
<keyword id="KW-0574">Periplasm</keyword>
<keyword id="KW-1185">Reference proteome</keyword>
<keyword id="KW-0677">Repeat</keyword>
<keyword id="KW-0732">Signal</keyword>
<keyword id="KW-0802">TPR repeat</keyword>
<feature type="signal peptide" evidence="1">
    <location>
        <begin position="1"/>
        <end position="26"/>
    </location>
</feature>
<feature type="chain" id="PRO_0000013804" description="Cell division coordinator CpoB">
    <location>
        <begin position="27"/>
        <end position="263"/>
    </location>
</feature>
<feature type="repeat" description="TPR 1" evidence="12">
    <location>
        <begin position="143"/>
        <end position="176"/>
    </location>
</feature>
<feature type="repeat" description="TPR 2" evidence="12">
    <location>
        <begin position="180"/>
        <end position="213"/>
    </location>
</feature>
<feature type="repeat" description="TPR 3" evidence="12">
    <location>
        <begin position="217"/>
        <end position="250"/>
    </location>
</feature>
<feature type="region of interest" description="Disordered" evidence="3">
    <location>
        <begin position="106"/>
        <end position="139"/>
    </location>
</feature>
<feature type="coiled-coil region" evidence="2">
    <location>
        <begin position="44"/>
        <end position="88"/>
    </location>
</feature>
<feature type="compositionally biased region" description="Low complexity" evidence="3">
    <location>
        <begin position="106"/>
        <end position="123"/>
    </location>
</feature>
<feature type="mutagenesis site" description="Decreases self-association." evidence="6">
    <original>Y</original>
    <variation>D</variation>
    <location>
        <position position="173"/>
    </location>
</feature>
<feature type="mutagenesis site" description="Does not affect oligomerization." evidence="6">
    <original>P</original>
    <variation>D</variation>
    <location>
        <position position="211"/>
    </location>
</feature>
<feature type="mutagenesis site" description="Forms dimers instead of trimers." evidence="6">
    <original>Y</original>
    <variation>D</variation>
    <location>
        <position position="247"/>
    </location>
</feature>
<feature type="sequence conflict" description="In Ref. 1; X65796." evidence="11" ref="1">
    <original>G</original>
    <variation>A</variation>
    <location>
        <position position="224"/>
    </location>
</feature>
<feature type="helix" evidence="15">
    <location>
        <begin position="38"/>
        <end position="99"/>
    </location>
</feature>
<feature type="helix" evidence="16">
    <location>
        <begin position="142"/>
        <end position="154"/>
    </location>
</feature>
<feature type="helix" evidence="16">
    <location>
        <begin position="159"/>
        <end position="170"/>
    </location>
</feature>
<feature type="helix" evidence="16">
    <location>
        <begin position="179"/>
        <end position="192"/>
    </location>
</feature>
<feature type="helix" evidence="16">
    <location>
        <begin position="198"/>
        <end position="209"/>
    </location>
</feature>
<feature type="strand" evidence="16">
    <location>
        <begin position="211"/>
        <end position="214"/>
    </location>
</feature>
<feature type="helix" evidence="16">
    <location>
        <begin position="215"/>
        <end position="230"/>
    </location>
</feature>
<feature type="turn" evidence="16">
    <location>
        <begin position="233"/>
        <end position="236"/>
    </location>
</feature>
<feature type="helix" evidence="16">
    <location>
        <begin position="237"/>
        <end position="246"/>
    </location>
</feature>
<feature type="helix" evidence="16">
    <location>
        <begin position="251"/>
        <end position="261"/>
    </location>
</feature>
<protein>
    <recommendedName>
        <fullName evidence="2 11">Cell division coordinator CpoB</fullName>
    </recommendedName>
</protein>
<dbReference type="EMBL" id="X65796">
    <property type="status" value="NOT_ANNOTATED_CDS"/>
    <property type="molecule type" value="Genomic_DNA"/>
</dbReference>
<dbReference type="EMBL" id="U00096">
    <property type="protein sequence ID" value="AAC73836.1"/>
    <property type="molecule type" value="Genomic_DNA"/>
</dbReference>
<dbReference type="EMBL" id="AP009048">
    <property type="protein sequence ID" value="BAA35408.1"/>
    <property type="molecule type" value="Genomic_DNA"/>
</dbReference>
<dbReference type="PIR" id="E64810">
    <property type="entry name" value="E64810"/>
</dbReference>
<dbReference type="RefSeq" id="NP_415270.1">
    <property type="nucleotide sequence ID" value="NC_000913.3"/>
</dbReference>
<dbReference type="RefSeq" id="WP_000097571.1">
    <property type="nucleotide sequence ID" value="NZ_SSZK01000033.1"/>
</dbReference>
<dbReference type="PDB" id="2WZ7">
    <property type="method" value="X-ray"/>
    <property type="resolution" value="2.48 A"/>
    <property type="chains" value="A/B/C/D/E/F=35-109"/>
</dbReference>
<dbReference type="PDB" id="2XDJ">
    <property type="method" value="X-ray"/>
    <property type="resolution" value="1.82 A"/>
    <property type="chains" value="A/B/C/D/E/F=35-109"/>
</dbReference>
<dbReference type="PDB" id="6G5S">
    <property type="method" value="NMR"/>
    <property type="chains" value="A=139-263"/>
</dbReference>
<dbReference type="PDBsum" id="2WZ7"/>
<dbReference type="PDBsum" id="2XDJ"/>
<dbReference type="PDBsum" id="6G5S"/>
<dbReference type="SMR" id="P45955"/>
<dbReference type="BioGRID" id="4260725">
    <property type="interactions" value="202"/>
</dbReference>
<dbReference type="BioGRID" id="851559">
    <property type="interactions" value="2"/>
</dbReference>
<dbReference type="DIP" id="DIP-11392N"/>
<dbReference type="FunCoup" id="P45955">
    <property type="interactions" value="88"/>
</dbReference>
<dbReference type="IntAct" id="P45955">
    <property type="interactions" value="3"/>
</dbReference>
<dbReference type="STRING" id="511145.b0742"/>
<dbReference type="TCDB" id="2.C.1.2.1">
    <property type="family name" value="the tonb-exbb-exbd/tola-tolq-tolr outer membrane receptor energizers and stabilizers (tonb/tola) family"/>
</dbReference>
<dbReference type="jPOST" id="P45955"/>
<dbReference type="PaxDb" id="511145-b0742"/>
<dbReference type="EnsemblBacteria" id="AAC73836">
    <property type="protein sequence ID" value="AAC73836"/>
    <property type="gene ID" value="b0742"/>
</dbReference>
<dbReference type="GeneID" id="947227"/>
<dbReference type="KEGG" id="ecj:JW0732"/>
<dbReference type="KEGG" id="eco:b0742"/>
<dbReference type="KEGG" id="ecoc:C3026_03725"/>
<dbReference type="PATRIC" id="fig|1411691.4.peg.1530"/>
<dbReference type="EchoBASE" id="EB2698"/>
<dbReference type="eggNOG" id="COG1729">
    <property type="taxonomic scope" value="Bacteria"/>
</dbReference>
<dbReference type="HOGENOM" id="CLU_044315_4_0_6"/>
<dbReference type="InParanoid" id="P45955"/>
<dbReference type="OMA" id="YWLGEVN"/>
<dbReference type="OrthoDB" id="9768142at2"/>
<dbReference type="PhylomeDB" id="P45955"/>
<dbReference type="BioCyc" id="EcoCyc:EG12854-MONOMER"/>
<dbReference type="BioCyc" id="MetaCyc:EG12854-MONOMER"/>
<dbReference type="EvolutionaryTrace" id="P45955"/>
<dbReference type="PRO" id="PR:P45955"/>
<dbReference type="Proteomes" id="UP000000625">
    <property type="component" value="Chromosome"/>
</dbReference>
<dbReference type="GO" id="GO:0030288">
    <property type="term" value="C:outer membrane-bounded periplasmic space"/>
    <property type="evidence" value="ECO:0000314"/>
    <property type="project" value="EcoCyc"/>
</dbReference>
<dbReference type="GO" id="GO:0032991">
    <property type="term" value="C:protein-containing complex"/>
    <property type="evidence" value="ECO:0000314"/>
    <property type="project" value="EcoCyc"/>
</dbReference>
<dbReference type="GO" id="GO:0051301">
    <property type="term" value="P:cell division"/>
    <property type="evidence" value="ECO:0000314"/>
    <property type="project" value="EcoCyc"/>
</dbReference>
<dbReference type="GO" id="GO:0043093">
    <property type="term" value="P:FtsZ-dependent cytokinesis"/>
    <property type="evidence" value="ECO:0007669"/>
    <property type="project" value="UniProtKB-UniRule"/>
</dbReference>
<dbReference type="GO" id="GO:0070206">
    <property type="term" value="P:protein trimerization"/>
    <property type="evidence" value="ECO:0007669"/>
    <property type="project" value="InterPro"/>
</dbReference>
<dbReference type="FunFam" id="1.20.5.110:FF:000062">
    <property type="entry name" value="Cell division coordinator CpoB"/>
    <property type="match status" value="1"/>
</dbReference>
<dbReference type="FunFam" id="1.25.40.10:FF:000109">
    <property type="entry name" value="Cell division coordinator CpoB"/>
    <property type="match status" value="1"/>
</dbReference>
<dbReference type="Gene3D" id="1.20.5.110">
    <property type="match status" value="1"/>
</dbReference>
<dbReference type="Gene3D" id="1.25.40.10">
    <property type="entry name" value="Tetratricopeptide repeat domain"/>
    <property type="match status" value="1"/>
</dbReference>
<dbReference type="HAMAP" id="MF_02066">
    <property type="entry name" value="CpoB"/>
    <property type="match status" value="1"/>
</dbReference>
<dbReference type="InterPro" id="IPR034706">
    <property type="entry name" value="CpoB"/>
</dbReference>
<dbReference type="InterPro" id="IPR014162">
    <property type="entry name" value="CpoB_C"/>
</dbReference>
<dbReference type="InterPro" id="IPR011990">
    <property type="entry name" value="TPR-like_helical_dom_sf"/>
</dbReference>
<dbReference type="InterPro" id="IPR019734">
    <property type="entry name" value="TPR_rpt"/>
</dbReference>
<dbReference type="InterPro" id="IPR032519">
    <property type="entry name" value="YbgF_tri"/>
</dbReference>
<dbReference type="NCBIfam" id="NF008068">
    <property type="entry name" value="PRK10803.1"/>
    <property type="match status" value="1"/>
</dbReference>
<dbReference type="NCBIfam" id="TIGR02795">
    <property type="entry name" value="tol_pal_ybgF"/>
    <property type="match status" value="1"/>
</dbReference>
<dbReference type="Pfam" id="PF16331">
    <property type="entry name" value="TolA_bind_tri"/>
    <property type="match status" value="1"/>
</dbReference>
<dbReference type="Pfam" id="PF13174">
    <property type="entry name" value="TPR_6"/>
    <property type="match status" value="3"/>
</dbReference>
<dbReference type="SUPFAM" id="SSF48452">
    <property type="entry name" value="TPR-like"/>
    <property type="match status" value="1"/>
</dbReference>
<dbReference type="PROSITE" id="PS50293">
    <property type="entry name" value="TPR_REGION"/>
    <property type="match status" value="1"/>
</dbReference>
<name>CPOB_ECOLI</name>
<evidence type="ECO:0000255" key="1"/>
<evidence type="ECO:0000255" key="2">
    <source>
        <dbReference type="HAMAP-Rule" id="MF_02066"/>
    </source>
</evidence>
<evidence type="ECO:0000256" key="3">
    <source>
        <dbReference type="SAM" id="MobiDB-lite"/>
    </source>
</evidence>
<evidence type="ECO:0000269" key="4">
    <source>
    </source>
</evidence>
<evidence type="ECO:0000269" key="5">
    <source>
    </source>
</evidence>
<evidence type="ECO:0000269" key="6">
    <source>
    </source>
</evidence>
<evidence type="ECO:0000269" key="7">
    <source>
    </source>
</evidence>
<evidence type="ECO:0000269" key="8">
    <source>
    </source>
</evidence>
<evidence type="ECO:0000269" key="9">
    <source>
    </source>
</evidence>
<evidence type="ECO:0000303" key="10">
    <source>
    </source>
</evidence>
<evidence type="ECO:0000305" key="11"/>
<evidence type="ECO:0000305" key="12">
    <source>
    </source>
</evidence>
<evidence type="ECO:0007744" key="13">
    <source>
        <dbReference type="PDB" id="2WZ7"/>
    </source>
</evidence>
<evidence type="ECO:0007744" key="14">
    <source>
        <dbReference type="PDB" id="2XDJ"/>
    </source>
</evidence>
<evidence type="ECO:0007829" key="15">
    <source>
        <dbReference type="PDB" id="2XDJ"/>
    </source>
</evidence>
<evidence type="ECO:0007829" key="16">
    <source>
        <dbReference type="PDB" id="6G5S"/>
    </source>
</evidence>
<gene>
    <name evidence="2 10" type="primary">cpoB</name>
    <name type="synonym">ybgF</name>
    <name type="ordered locus">b0742</name>
    <name type="ordered locus">JW0732</name>
</gene>
<proteinExistence type="evidence at protein level"/>
<reference key="1">
    <citation type="journal article" date="1992" name="Mol. Microbiol.">
        <title>The excC gene of Escherichia coli K-12 required for cell envelope integrity encodes the peptidoglycan-associated lipoprotein (PAL).</title>
        <authorList>
            <person name="Lazzaroni J.-C."/>
            <person name="Portalier R."/>
        </authorList>
    </citation>
    <scope>NUCLEOTIDE SEQUENCE [GENOMIC DNA]</scope>
    <source>
        <strain>K12</strain>
    </source>
</reference>
<reference key="2">
    <citation type="journal article" date="1996" name="DNA Res.">
        <title>A 718-kb DNA sequence of the Escherichia coli K-12 genome corresponding to the 12.7-28.0 min region on the linkage map.</title>
        <authorList>
            <person name="Oshima T."/>
            <person name="Aiba H."/>
            <person name="Baba T."/>
            <person name="Fujita K."/>
            <person name="Hayashi K."/>
            <person name="Honjo A."/>
            <person name="Ikemoto K."/>
            <person name="Inada T."/>
            <person name="Itoh T."/>
            <person name="Kajihara M."/>
            <person name="Kanai K."/>
            <person name="Kashimoto K."/>
            <person name="Kimura S."/>
            <person name="Kitagawa M."/>
            <person name="Makino K."/>
            <person name="Masuda S."/>
            <person name="Miki T."/>
            <person name="Mizobuchi K."/>
            <person name="Mori H."/>
            <person name="Motomura K."/>
            <person name="Nakamura Y."/>
            <person name="Nashimoto H."/>
            <person name="Nishio Y."/>
            <person name="Saito N."/>
            <person name="Sampei G."/>
            <person name="Seki Y."/>
            <person name="Tagami H."/>
            <person name="Takemoto K."/>
            <person name="Wada C."/>
            <person name="Yamamoto Y."/>
            <person name="Yano M."/>
            <person name="Horiuchi T."/>
        </authorList>
    </citation>
    <scope>NUCLEOTIDE SEQUENCE [LARGE SCALE GENOMIC DNA]</scope>
    <source>
        <strain>K12 / W3110 / ATCC 27325 / DSM 5911</strain>
    </source>
</reference>
<reference key="3">
    <citation type="journal article" date="1997" name="Science">
        <title>The complete genome sequence of Escherichia coli K-12.</title>
        <authorList>
            <person name="Blattner F.R."/>
            <person name="Plunkett G. III"/>
            <person name="Bloch C.A."/>
            <person name="Perna N.T."/>
            <person name="Burland V."/>
            <person name="Riley M."/>
            <person name="Collado-Vides J."/>
            <person name="Glasner J.D."/>
            <person name="Rode C.K."/>
            <person name="Mayhew G.F."/>
            <person name="Gregor J."/>
            <person name="Davis N.W."/>
            <person name="Kirkpatrick H.A."/>
            <person name="Goeden M.A."/>
            <person name="Rose D.J."/>
            <person name="Mau B."/>
            <person name="Shao Y."/>
        </authorList>
    </citation>
    <scope>NUCLEOTIDE SEQUENCE [LARGE SCALE GENOMIC DNA]</scope>
    <source>
        <strain>K12 / MG1655 / ATCC 47076</strain>
    </source>
</reference>
<reference key="4">
    <citation type="journal article" date="2006" name="Mol. Syst. Biol.">
        <title>Highly accurate genome sequences of Escherichia coli K-12 strains MG1655 and W3110.</title>
        <authorList>
            <person name="Hayashi K."/>
            <person name="Morooka N."/>
            <person name="Yamamoto Y."/>
            <person name="Fujita K."/>
            <person name="Isono K."/>
            <person name="Choi S."/>
            <person name="Ohtsubo E."/>
            <person name="Baba T."/>
            <person name="Wanner B.L."/>
            <person name="Mori H."/>
            <person name="Horiuchi T."/>
        </authorList>
    </citation>
    <scope>NUCLEOTIDE SEQUENCE [LARGE SCALE GENOMIC DNA]</scope>
    <source>
        <strain>K12 / W3110 / ATCC 27325 / DSM 5911</strain>
    </source>
</reference>
<reference key="5">
    <citation type="journal article" date="1995" name="Nucleic Acids Res.">
        <title>Detection of new genes in a bacterial genome using Markov models for three gene classes.</title>
        <authorList>
            <person name="Borodovsky M."/>
            <person name="McIninch J."/>
            <person name="Koonin E.V."/>
            <person name="Rudd K.E."/>
            <person name="Medigue C."/>
            <person name="Danchin A."/>
        </authorList>
    </citation>
    <scope>IDENTIFICATION</scope>
</reference>
<reference key="6">
    <citation type="journal article" date="1996" name="J. Bacteriol.">
        <title>Characterization of the tol-pal region of Escherichia coli K-12: translational control of tolR expression by TolQ and identification of a new open reading frame downstream of pal encoding a periplasmic protein.</title>
        <authorList>
            <person name="Vianney A."/>
            <person name="Muller M.M."/>
            <person name="Clavel T."/>
            <person name="Lazzaroni J.C."/>
            <person name="Portalier R."/>
            <person name="Webster R.E."/>
        </authorList>
    </citation>
    <scope>IDENTIFICATION</scope>
    <scope>SUBCELLULAR LOCATION</scope>
</reference>
<reference key="7">
    <citation type="journal article" date="2002" name="Mol. Microbiol.">
        <title>The Tol/Pal system function requires an interaction between the C-terminal domain of TolA and the N-terminal domain of TolB.</title>
        <authorList>
            <person name="Walburger A."/>
            <person name="Lazdunski C."/>
            <person name="Corda Y."/>
        </authorList>
    </citation>
    <scope>INTERACTION WITH TOLA</scope>
</reference>
<reference key="8">
    <citation type="journal article" date="2006" name="J. Biol. Chem.">
        <title>Defining the role of the Escherichia coli chaperone SecB using comparative proteomics.</title>
        <authorList>
            <person name="Baars L."/>
            <person name="Ytterberg A.J."/>
            <person name="Drew D."/>
            <person name="Wagner S."/>
            <person name="Thilo C."/>
            <person name="van Wijk K.J."/>
            <person name="de Gier J.W."/>
        </authorList>
    </citation>
    <scope>IDENTIFICATION BY MASS SPECTROMETRY</scope>
    <scope>SUBSTRATE FOR SECB</scope>
    <source>
        <strain>K12 / MC4100</strain>
    </source>
</reference>
<reference key="9">
    <citation type="journal article" date="2010" name="Proteins">
        <title>Self-association of TPR domains: Lessons learned from a designed, consensus-based TPR oligomer.</title>
        <authorList>
            <person name="Krachler A.M."/>
            <person name="Sharma A."/>
            <person name="Kleanthous C."/>
        </authorList>
    </citation>
    <scope>SUBUNIT</scope>
    <scope>DOMAIN</scope>
    <scope>TPR REPEATS</scope>
    <scope>MUTAGENESIS OF TYR-173; PRO-211 AND TYR-247</scope>
    <source>
        <strain>MG1566</strain>
    </source>
</reference>
<reference key="10">
    <citation type="journal article" date="2015" name="Elife">
        <title>Coordination of peptidoglycan synthesis and outer membrane constriction during Escherichia coli cell division.</title>
        <authorList>
            <person name="Gray A.N."/>
            <person name="Egan A.J."/>
            <person name="Van't Veer I.L."/>
            <person name="Verheul J."/>
            <person name="Colavin A."/>
            <person name="Koumoutsi A."/>
            <person name="Biboy J."/>
            <person name="Altelaar A.F."/>
            <person name="Damen M.J."/>
            <person name="Huang K.C."/>
            <person name="Simorre J.P."/>
            <person name="Breukink E."/>
            <person name="den Blaauwen T."/>
            <person name="Typas A."/>
            <person name="Gross C.A."/>
            <person name="Vollmer W."/>
        </authorList>
    </citation>
    <scope>FUNCTION</scope>
    <scope>INTERACTION WITH PBP1B AND TOLA</scope>
    <scope>SUBCELLULAR LOCATION</scope>
    <scope>DISRUPTION PHENOTYPE</scope>
</reference>
<reference evidence="13 14" key="11">
    <citation type="journal article" date="2010" name="J. Mol. Biol.">
        <title>TolA modulates the oligomeric status of YbgF in the bacterial periplasm.</title>
        <authorList>
            <person name="Krachler A.M."/>
            <person name="Sharma A."/>
            <person name="Cauldwell A."/>
            <person name="Papadakos G."/>
            <person name="Kleanthous C."/>
        </authorList>
    </citation>
    <scope>X-RAY CRYSTALLOGRAPHY (1.82 ANGSTROMS) OF 35-109</scope>
    <scope>SUBUNIT</scope>
    <scope>INTERACTION WITH TOLA</scope>
    <scope>DOMAIN</scope>
</reference>
<sequence>MSSNFRHQLLSLSLLVGIAAPWAAFAQAPISSVGSGSVEDRVTQLERISNAHSQLLTQLQQQLSDNQSDIDSLRGQIQENQYQLNQVVERQKQILLQIDSLSSGGAAAQSTSGDQSGAAASTTPTADAGTANAGAPVKSGNANTDYNAAIALVQDKSRQDDAMVAFQNFIKNYPDSTYLPNANYWLGQLNYNKGKKDDAAYYFASVVKNYPKSPKAADAMFKVGVIMQDKGDTAKAKAVYQQVISKYPGTDGAKQAQKRLNAM</sequence>
<organism>
    <name type="scientific">Escherichia coli (strain K12)</name>
    <dbReference type="NCBI Taxonomy" id="83333"/>
    <lineage>
        <taxon>Bacteria</taxon>
        <taxon>Pseudomonadati</taxon>
        <taxon>Pseudomonadota</taxon>
        <taxon>Gammaproteobacteria</taxon>
        <taxon>Enterobacterales</taxon>
        <taxon>Enterobacteriaceae</taxon>
        <taxon>Escherichia</taxon>
    </lineage>
</organism>
<accession>P45955</accession>
<accession>P75756</accession>